<feature type="chain" id="PRO_0000356420" description="Large ribosomal subunit protein bL33">
    <location>
        <begin position="1"/>
        <end position="52"/>
    </location>
</feature>
<name>RL33_CAMJ8</name>
<reference key="1">
    <citation type="journal article" date="2007" name="J. Bacteriol.">
        <title>The complete genome sequence of Campylobacter jejuni strain 81116 (NCTC11828).</title>
        <authorList>
            <person name="Pearson B.M."/>
            <person name="Gaskin D.J.H."/>
            <person name="Segers R.P.A.M."/>
            <person name="Wells J.M."/>
            <person name="Nuijten P.J.M."/>
            <person name="van Vliet A.H.M."/>
        </authorList>
    </citation>
    <scope>NUCLEOTIDE SEQUENCE [LARGE SCALE GENOMIC DNA]</scope>
    <source>
        <strain>81116 / NCTC 11828</strain>
    </source>
</reference>
<accession>A8FKQ6</accession>
<protein>
    <recommendedName>
        <fullName evidence="1">Large ribosomal subunit protein bL33</fullName>
    </recommendedName>
    <alternativeName>
        <fullName evidence="2">50S ribosomal protein L33</fullName>
    </alternativeName>
</protein>
<organism>
    <name type="scientific">Campylobacter jejuni subsp. jejuni serotype O:6 (strain 81116 / NCTC 11828)</name>
    <dbReference type="NCBI Taxonomy" id="407148"/>
    <lineage>
        <taxon>Bacteria</taxon>
        <taxon>Pseudomonadati</taxon>
        <taxon>Campylobacterota</taxon>
        <taxon>Epsilonproteobacteria</taxon>
        <taxon>Campylobacterales</taxon>
        <taxon>Campylobacteraceae</taxon>
        <taxon>Campylobacter</taxon>
    </lineage>
</organism>
<sequence>MRIKVGLKCEECGDINYSTYKNSKNTTEKLELKKYCPRLKKHTLHKEVKLKS</sequence>
<keyword id="KW-0687">Ribonucleoprotein</keyword>
<keyword id="KW-0689">Ribosomal protein</keyword>
<dbReference type="EMBL" id="CP000814">
    <property type="protein sequence ID" value="ABV52043.1"/>
    <property type="molecule type" value="Genomic_DNA"/>
</dbReference>
<dbReference type="RefSeq" id="WP_002793551.1">
    <property type="nucleotide sequence ID" value="NC_009839.1"/>
</dbReference>
<dbReference type="SMR" id="A8FKQ6"/>
<dbReference type="GeneID" id="44003941"/>
<dbReference type="KEGG" id="cju:C8J_0444"/>
<dbReference type="HOGENOM" id="CLU_190949_0_2_7"/>
<dbReference type="GO" id="GO:0005737">
    <property type="term" value="C:cytoplasm"/>
    <property type="evidence" value="ECO:0007669"/>
    <property type="project" value="UniProtKB-ARBA"/>
</dbReference>
<dbReference type="GO" id="GO:1990904">
    <property type="term" value="C:ribonucleoprotein complex"/>
    <property type="evidence" value="ECO:0007669"/>
    <property type="project" value="UniProtKB-KW"/>
</dbReference>
<dbReference type="GO" id="GO:0005840">
    <property type="term" value="C:ribosome"/>
    <property type="evidence" value="ECO:0007669"/>
    <property type="project" value="UniProtKB-KW"/>
</dbReference>
<dbReference type="GO" id="GO:0003735">
    <property type="term" value="F:structural constituent of ribosome"/>
    <property type="evidence" value="ECO:0007669"/>
    <property type="project" value="InterPro"/>
</dbReference>
<dbReference type="GO" id="GO:0006412">
    <property type="term" value="P:translation"/>
    <property type="evidence" value="ECO:0007669"/>
    <property type="project" value="UniProtKB-UniRule"/>
</dbReference>
<dbReference type="Gene3D" id="2.20.28.120">
    <property type="entry name" value="Ribosomal protein L33"/>
    <property type="match status" value="1"/>
</dbReference>
<dbReference type="HAMAP" id="MF_00294">
    <property type="entry name" value="Ribosomal_bL33"/>
    <property type="match status" value="1"/>
</dbReference>
<dbReference type="InterPro" id="IPR001705">
    <property type="entry name" value="Ribosomal_bL33"/>
</dbReference>
<dbReference type="InterPro" id="IPR018264">
    <property type="entry name" value="Ribosomal_bL33_CS"/>
</dbReference>
<dbReference type="InterPro" id="IPR038584">
    <property type="entry name" value="Ribosomal_bL33_sf"/>
</dbReference>
<dbReference type="InterPro" id="IPR011332">
    <property type="entry name" value="Ribosomal_zn-bd"/>
</dbReference>
<dbReference type="NCBIfam" id="NF001764">
    <property type="entry name" value="PRK00504.1"/>
    <property type="match status" value="1"/>
</dbReference>
<dbReference type="NCBIfam" id="NF001860">
    <property type="entry name" value="PRK00595.1"/>
    <property type="match status" value="1"/>
</dbReference>
<dbReference type="NCBIfam" id="TIGR01023">
    <property type="entry name" value="rpmG_bact"/>
    <property type="match status" value="1"/>
</dbReference>
<dbReference type="PANTHER" id="PTHR43168">
    <property type="entry name" value="50S RIBOSOMAL PROTEIN L33, CHLOROPLASTIC"/>
    <property type="match status" value="1"/>
</dbReference>
<dbReference type="PANTHER" id="PTHR43168:SF6">
    <property type="entry name" value="LARGE RIBOSOMAL SUBUNIT PROTEIN BL33A"/>
    <property type="match status" value="1"/>
</dbReference>
<dbReference type="Pfam" id="PF00471">
    <property type="entry name" value="Ribosomal_L33"/>
    <property type="match status" value="1"/>
</dbReference>
<dbReference type="SUPFAM" id="SSF57829">
    <property type="entry name" value="Zn-binding ribosomal proteins"/>
    <property type="match status" value="1"/>
</dbReference>
<dbReference type="PROSITE" id="PS00582">
    <property type="entry name" value="RIBOSOMAL_L33"/>
    <property type="match status" value="1"/>
</dbReference>
<comment type="similarity">
    <text evidence="1">Belongs to the bacterial ribosomal protein bL33 family.</text>
</comment>
<evidence type="ECO:0000255" key="1">
    <source>
        <dbReference type="HAMAP-Rule" id="MF_00294"/>
    </source>
</evidence>
<evidence type="ECO:0000305" key="2"/>
<gene>
    <name evidence="1" type="primary">rpmG</name>
    <name type="ordered locus">C8J_0444</name>
</gene>
<proteinExistence type="inferred from homology"/>